<proteinExistence type="evidence at transcript level"/>
<keyword id="KW-0175">Coiled coil</keyword>
<keyword id="KW-0333">Golgi apparatus</keyword>
<keyword id="KW-1185">Reference proteome</keyword>
<dbReference type="EMBL" id="EU249331">
    <property type="protein sequence ID" value="ABY67251.1"/>
    <property type="molecule type" value="mRNA"/>
</dbReference>
<dbReference type="EMBL" id="AC005397">
    <property type="protein sequence ID" value="AAC62888.1"/>
    <property type="status" value="ALT_SEQ"/>
    <property type="molecule type" value="Genomic_DNA"/>
</dbReference>
<dbReference type="EMBL" id="CP002685">
    <property type="protein sequence ID" value="AEC10653.1"/>
    <property type="molecule type" value="Genomic_DNA"/>
</dbReference>
<dbReference type="EMBL" id="AY069912">
    <property type="protein sequence ID" value="AAL47462.1"/>
    <property type="molecule type" value="mRNA"/>
</dbReference>
<dbReference type="EMBL" id="BT001025">
    <property type="protein sequence ID" value="AAN46779.1"/>
    <property type="molecule type" value="mRNA"/>
</dbReference>
<dbReference type="PIR" id="F84899">
    <property type="entry name" value="F84899"/>
</dbReference>
<dbReference type="RefSeq" id="NP_850447.1">
    <property type="nucleotide sequence ID" value="NM_180116.2"/>
</dbReference>
<dbReference type="SMR" id="Q8VYU6"/>
<dbReference type="FunCoup" id="Q8VYU6">
    <property type="interactions" value="413"/>
</dbReference>
<dbReference type="STRING" id="3702.Q8VYU6"/>
<dbReference type="iPTMnet" id="Q8VYU6"/>
<dbReference type="PaxDb" id="3702-AT2G46180.1"/>
<dbReference type="ProteomicsDB" id="248440"/>
<dbReference type="EnsemblPlants" id="AT2G46180.1">
    <property type="protein sequence ID" value="AT2G46180.1"/>
    <property type="gene ID" value="AT2G46180"/>
</dbReference>
<dbReference type="GeneID" id="819225"/>
<dbReference type="Gramene" id="AT2G46180.1">
    <property type="protein sequence ID" value="AT2G46180.1"/>
    <property type="gene ID" value="AT2G46180"/>
</dbReference>
<dbReference type="KEGG" id="ath:AT2G46180"/>
<dbReference type="Araport" id="AT2G46180"/>
<dbReference type="TAIR" id="AT2G46180">
    <property type="gene designation" value="GC4"/>
</dbReference>
<dbReference type="eggNOG" id="ENOG502QSWR">
    <property type="taxonomic scope" value="Eukaryota"/>
</dbReference>
<dbReference type="HOGENOM" id="CLU_023485_1_0_1"/>
<dbReference type="InParanoid" id="Q8VYU6"/>
<dbReference type="OMA" id="RWKDESS"/>
<dbReference type="OrthoDB" id="71227at2759"/>
<dbReference type="PhylomeDB" id="Q8VYU6"/>
<dbReference type="PRO" id="PR:Q8VYU6"/>
<dbReference type="Proteomes" id="UP000006548">
    <property type="component" value="Chromosome 2"/>
</dbReference>
<dbReference type="ExpressionAtlas" id="Q8VYU6">
    <property type="expression patterns" value="baseline and differential"/>
</dbReference>
<dbReference type="GO" id="GO:0005794">
    <property type="term" value="C:Golgi apparatus"/>
    <property type="evidence" value="ECO:0000314"/>
    <property type="project" value="TAIR"/>
</dbReference>
<dbReference type="GO" id="GO:0007030">
    <property type="term" value="P:Golgi organization"/>
    <property type="evidence" value="ECO:0000250"/>
    <property type="project" value="TAIR"/>
</dbReference>
<dbReference type="PANTHER" id="PTHR18921">
    <property type="entry name" value="MYOSIN HEAVY CHAIN - RELATED"/>
    <property type="match status" value="1"/>
</dbReference>
<dbReference type="PANTHER" id="PTHR18921:SF2">
    <property type="entry name" value="THYROID RECEPTOR-INTERACTING PROTEIN 11"/>
    <property type="match status" value="1"/>
</dbReference>
<gene>
    <name type="primary">GC4</name>
    <name type="ordered locus">At2g46180</name>
    <name type="ORF">T3F17.17</name>
</gene>
<accession>Q8VYU6</accession>
<accession>O82351</accession>
<evidence type="ECO:0000250" key="1"/>
<evidence type="ECO:0000255" key="2"/>
<evidence type="ECO:0000256" key="3">
    <source>
        <dbReference type="SAM" id="MobiDB-lite"/>
    </source>
</evidence>
<evidence type="ECO:0000269" key="4">
    <source>
    </source>
</evidence>
<evidence type="ECO:0000305" key="5"/>
<feature type="chain" id="PRO_0000348538" description="Golgin candidate 4">
    <location>
        <begin position="1"/>
        <end position="725"/>
    </location>
</feature>
<feature type="domain" description="GRIP">
    <location>
        <begin position="562"/>
        <end position="613"/>
    </location>
</feature>
<feature type="region of interest" description="Disordered" evidence="3">
    <location>
        <begin position="17"/>
        <end position="62"/>
    </location>
</feature>
<feature type="region of interest" description="Disordered" evidence="3">
    <location>
        <begin position="134"/>
        <end position="183"/>
    </location>
</feature>
<feature type="region of interest" description="Disordered" evidence="3">
    <location>
        <begin position="191"/>
        <end position="210"/>
    </location>
</feature>
<feature type="region of interest" description="Disordered" evidence="3">
    <location>
        <begin position="311"/>
        <end position="349"/>
    </location>
</feature>
<feature type="region of interest" description="Disordered" evidence="3">
    <location>
        <begin position="672"/>
        <end position="725"/>
    </location>
</feature>
<feature type="coiled-coil region" evidence="2">
    <location>
        <begin position="66"/>
        <end position="132"/>
    </location>
</feature>
<feature type="coiled-coil region" evidence="2">
    <location>
        <begin position="191"/>
        <end position="316"/>
    </location>
</feature>
<feature type="coiled-coil region" evidence="2">
    <location>
        <begin position="344"/>
        <end position="407"/>
    </location>
</feature>
<feature type="coiled-coil region" evidence="2">
    <location>
        <begin position="437"/>
        <end position="563"/>
    </location>
</feature>
<feature type="compositionally biased region" description="Acidic residues" evidence="3">
    <location>
        <begin position="21"/>
        <end position="30"/>
    </location>
</feature>
<feature type="compositionally biased region" description="Polar residues" evidence="3">
    <location>
        <begin position="148"/>
        <end position="175"/>
    </location>
</feature>
<feature type="compositionally biased region" description="Basic and acidic residues" evidence="3">
    <location>
        <begin position="324"/>
        <end position="349"/>
    </location>
</feature>
<feature type="compositionally biased region" description="Basic and acidic residues" evidence="3">
    <location>
        <begin position="672"/>
        <end position="688"/>
    </location>
</feature>
<feature type="compositionally biased region" description="Low complexity" evidence="3">
    <location>
        <begin position="711"/>
        <end position="725"/>
    </location>
</feature>
<name>GOGC4_ARATH</name>
<reference key="1">
    <citation type="journal article" date="2007" name="J. Exp. Bot.">
        <title>Localization and domain characterization of Arabidopsis golgin candidates.</title>
        <authorList>
            <person name="Latijnhouwers M."/>
            <person name="Gillespie T."/>
            <person name="Boevink P."/>
            <person name="Kriechbaumer V."/>
            <person name="Hawes C."/>
            <person name="Carvalho C.M."/>
        </authorList>
    </citation>
    <scope>NUCLEOTIDE SEQUENCE [MRNA]</scope>
    <scope>SUBCELLULAR LOCATION</scope>
    <scope>GENE FAMILY</scope>
    <scope>NOMENCLATURE</scope>
</reference>
<reference key="2">
    <citation type="journal article" date="1999" name="Nature">
        <title>Sequence and analysis of chromosome 2 of the plant Arabidopsis thaliana.</title>
        <authorList>
            <person name="Lin X."/>
            <person name="Kaul S."/>
            <person name="Rounsley S.D."/>
            <person name="Shea T.P."/>
            <person name="Benito M.-I."/>
            <person name="Town C.D."/>
            <person name="Fujii C.Y."/>
            <person name="Mason T.M."/>
            <person name="Bowman C.L."/>
            <person name="Barnstead M.E."/>
            <person name="Feldblyum T.V."/>
            <person name="Buell C.R."/>
            <person name="Ketchum K.A."/>
            <person name="Lee J.J."/>
            <person name="Ronning C.M."/>
            <person name="Koo H.L."/>
            <person name="Moffat K.S."/>
            <person name="Cronin L.A."/>
            <person name="Shen M."/>
            <person name="Pai G."/>
            <person name="Van Aken S."/>
            <person name="Umayam L."/>
            <person name="Tallon L.J."/>
            <person name="Gill J.E."/>
            <person name="Adams M.D."/>
            <person name="Carrera A.J."/>
            <person name="Creasy T.H."/>
            <person name="Goodman H.M."/>
            <person name="Somerville C.R."/>
            <person name="Copenhaver G.P."/>
            <person name="Preuss D."/>
            <person name="Nierman W.C."/>
            <person name="White O."/>
            <person name="Eisen J.A."/>
            <person name="Salzberg S.L."/>
            <person name="Fraser C.M."/>
            <person name="Venter J.C."/>
        </authorList>
    </citation>
    <scope>NUCLEOTIDE SEQUENCE [LARGE SCALE GENOMIC DNA]</scope>
    <source>
        <strain>cv. Columbia</strain>
    </source>
</reference>
<reference key="3">
    <citation type="journal article" date="2017" name="Plant J.">
        <title>Araport11: a complete reannotation of the Arabidopsis thaliana reference genome.</title>
        <authorList>
            <person name="Cheng C.Y."/>
            <person name="Krishnakumar V."/>
            <person name="Chan A.P."/>
            <person name="Thibaud-Nissen F."/>
            <person name="Schobel S."/>
            <person name="Town C.D."/>
        </authorList>
    </citation>
    <scope>GENOME REANNOTATION</scope>
    <source>
        <strain>cv. Columbia</strain>
    </source>
</reference>
<reference key="4">
    <citation type="journal article" date="2003" name="Science">
        <title>Empirical analysis of transcriptional activity in the Arabidopsis genome.</title>
        <authorList>
            <person name="Yamada K."/>
            <person name="Lim J."/>
            <person name="Dale J.M."/>
            <person name="Chen H."/>
            <person name="Shinn P."/>
            <person name="Palm C.J."/>
            <person name="Southwick A.M."/>
            <person name="Wu H.C."/>
            <person name="Kim C.J."/>
            <person name="Nguyen M."/>
            <person name="Pham P.K."/>
            <person name="Cheuk R.F."/>
            <person name="Karlin-Newmann G."/>
            <person name="Liu S.X."/>
            <person name="Lam B."/>
            <person name="Sakano H."/>
            <person name="Wu T."/>
            <person name="Yu G."/>
            <person name="Miranda M."/>
            <person name="Quach H.L."/>
            <person name="Tripp M."/>
            <person name="Chang C.H."/>
            <person name="Lee J.M."/>
            <person name="Toriumi M.J."/>
            <person name="Chan M.M."/>
            <person name="Tang C.C."/>
            <person name="Onodera C.S."/>
            <person name="Deng J.M."/>
            <person name="Akiyama K."/>
            <person name="Ansari Y."/>
            <person name="Arakawa T."/>
            <person name="Banh J."/>
            <person name="Banno F."/>
            <person name="Bowser L."/>
            <person name="Brooks S.Y."/>
            <person name="Carninci P."/>
            <person name="Chao Q."/>
            <person name="Choy N."/>
            <person name="Enju A."/>
            <person name="Goldsmith A.D."/>
            <person name="Gurjal M."/>
            <person name="Hansen N.F."/>
            <person name="Hayashizaki Y."/>
            <person name="Johnson-Hopson C."/>
            <person name="Hsuan V.W."/>
            <person name="Iida K."/>
            <person name="Karnes M."/>
            <person name="Khan S."/>
            <person name="Koesema E."/>
            <person name="Ishida J."/>
            <person name="Jiang P.X."/>
            <person name="Jones T."/>
            <person name="Kawai J."/>
            <person name="Kamiya A."/>
            <person name="Meyers C."/>
            <person name="Nakajima M."/>
            <person name="Narusaka M."/>
            <person name="Seki M."/>
            <person name="Sakurai T."/>
            <person name="Satou M."/>
            <person name="Tamse R."/>
            <person name="Vaysberg M."/>
            <person name="Wallender E.K."/>
            <person name="Wong C."/>
            <person name="Yamamura Y."/>
            <person name="Yuan S."/>
            <person name="Shinozaki K."/>
            <person name="Davis R.W."/>
            <person name="Theologis A."/>
            <person name="Ecker J.R."/>
        </authorList>
    </citation>
    <scope>NUCLEOTIDE SEQUENCE [LARGE SCALE MRNA]</scope>
    <source>
        <strain>cv. Columbia</strain>
    </source>
</reference>
<sequence length="725" mass="82866">MWSSVANLKENLNKIAHDVHDDDEDDDEDLTIYGSTNGGTDRRNSNGFRYSRSPMANGFESPVNPEIERYKAEINKLQKSESEIKALSVNYAALLKEKEDQISRLNQENGSLKQNLTSTNAALKESRLDLSRASNNNAIKGNGDHSPNRSQRSPTNWKNRNQMNNGIASKPNGTENDSESHKKEKEFAEMLEERTRSMASAQARELEKEREKSANLQILLQEERKQNETFKEELQSLRLDKEKTLMESNKVRRELDAKLAEIRQLQMKLNGGEQHAFGISRENLKEVNKALEKENNELKLKRSELEAALEASQKSTSRKLFPKSTEDLSRHLSSLDEEKAGTFPGKEDMEKSLQRLEKELEEARREKDKARQELKRLKQHLLEKETEESEKMDEDSRLIDELRQTNEYQRSQILGLEKALRQTMANQEEIKSSSDLEIRKSKGIIEDLNQKLANCLRTIDSKNVELLNLQTALGQYYAEIEAKEHFERELAVAKEDAMKLSARLKDVDEQLESSKKEKEEITSKVLHAENIAAEWKNRVSKVEDDNAKVRRVLEQSMTRLNRMSMDSDFLVDRRIVIKLLVTYFQRNHSREVLDLMVRMLGFSEEEKQRIGLAQQGAAGKGVVRGVLGFPGRLVGGILGGGGGSPDSHPNMASDNQSFADMWVEFLLKDAEERERREAEDAANKEQEKATVSSTQRPKYEQSDSEFSTVPLTSSNSNHRLSRLLT</sequence>
<organism>
    <name type="scientific">Arabidopsis thaliana</name>
    <name type="common">Mouse-ear cress</name>
    <dbReference type="NCBI Taxonomy" id="3702"/>
    <lineage>
        <taxon>Eukaryota</taxon>
        <taxon>Viridiplantae</taxon>
        <taxon>Streptophyta</taxon>
        <taxon>Embryophyta</taxon>
        <taxon>Tracheophyta</taxon>
        <taxon>Spermatophyta</taxon>
        <taxon>Magnoliopsida</taxon>
        <taxon>eudicotyledons</taxon>
        <taxon>Gunneridae</taxon>
        <taxon>Pentapetalae</taxon>
        <taxon>rosids</taxon>
        <taxon>malvids</taxon>
        <taxon>Brassicales</taxon>
        <taxon>Brassicaceae</taxon>
        <taxon>Camelineae</taxon>
        <taxon>Arabidopsis</taxon>
    </lineage>
</organism>
<protein>
    <recommendedName>
        <fullName>Golgin candidate 4</fullName>
        <shortName>AtGC4</shortName>
    </recommendedName>
</protein>
<comment type="function">
    <text evidence="1">Golgi matrix protein playing a role in tethering of vesicles to Golgi membranes and in maintaining the overall structure of the Golgi apparatus.</text>
</comment>
<comment type="subcellular location">
    <subcellularLocation>
        <location evidence="4">Golgi apparatus</location>
    </subcellularLocation>
    <text>Probably located to cisternal rims of cis or medial Golgi.</text>
</comment>
<comment type="domain">
    <text>The C-terminal domain (556-725) is necessary and sufficient for Golgi targeting.</text>
</comment>
<comment type="sequence caution" evidence="5">
    <conflict type="erroneous gene model prediction">
        <sequence resource="EMBL-CDS" id="AAC62888"/>
    </conflict>
</comment>